<keyword id="KW-0256">Endoplasmic reticulum</keyword>
<keyword id="KW-0325">Glycoprotein</keyword>
<keyword id="KW-0328">Glycosyltransferase</keyword>
<keyword id="KW-0337">GPI-anchor biosynthesis</keyword>
<keyword id="KW-0472">Membrane</keyword>
<keyword id="KW-1185">Reference proteome</keyword>
<keyword id="KW-0808">Transferase</keyword>
<keyword id="KW-0812">Transmembrane</keyword>
<keyword id="KW-1133">Transmembrane helix</keyword>
<reference key="1">
    <citation type="journal article" date="2000" name="Genetics">
        <title>Mutations affecting the development of the peripheral nervous system in Drosophila: a molecular screen for novel proteins.</title>
        <authorList>
            <person name="Prokopenko S.N."/>
            <person name="He Y."/>
            <person name="Lu Y."/>
            <person name="Bellen H.J."/>
        </authorList>
    </citation>
    <scope>NUCLEOTIDE SEQUENCE [MRNA]</scope>
</reference>
<reference key="2">
    <citation type="journal article" date="2012" name="Vis. Neurosci.">
        <title>Drosophila GPI-mannosyltransferase 2 is required for GPI anchor attachment and surface expression of chaoptin.</title>
        <authorList>
            <person name="Rosenbaum E.E."/>
            <person name="Brehm K.S."/>
            <person name="Vasiljevic E."/>
            <person name="Gajeski A."/>
            <person name="Colley N.J."/>
        </authorList>
    </citation>
    <scope>NUCLEOTIDE SEQUENCE [GENOMIC DNA]</scope>
    <scope>FUNCTION</scope>
    <scope>DISRUPTION PHENOTYPE</scope>
    <scope>MUTAGENESIS OF TRP-62; ASP-63; ALA-276; GLN-306 AND TRP-310</scope>
    <source>
        <strain>CN BW</strain>
    </source>
</reference>
<reference key="3">
    <citation type="journal article" date="2000" name="Science">
        <title>The genome sequence of Drosophila melanogaster.</title>
        <authorList>
            <person name="Adams M.D."/>
            <person name="Celniker S.E."/>
            <person name="Holt R.A."/>
            <person name="Evans C.A."/>
            <person name="Gocayne J.D."/>
            <person name="Amanatides P.G."/>
            <person name="Scherer S.E."/>
            <person name="Li P.W."/>
            <person name="Hoskins R.A."/>
            <person name="Galle R.F."/>
            <person name="George R.A."/>
            <person name="Lewis S.E."/>
            <person name="Richards S."/>
            <person name="Ashburner M."/>
            <person name="Henderson S.N."/>
            <person name="Sutton G.G."/>
            <person name="Wortman J.R."/>
            <person name="Yandell M.D."/>
            <person name="Zhang Q."/>
            <person name="Chen L.X."/>
            <person name="Brandon R.C."/>
            <person name="Rogers Y.-H.C."/>
            <person name="Blazej R.G."/>
            <person name="Champe M."/>
            <person name="Pfeiffer B.D."/>
            <person name="Wan K.H."/>
            <person name="Doyle C."/>
            <person name="Baxter E.G."/>
            <person name="Helt G."/>
            <person name="Nelson C.R."/>
            <person name="Miklos G.L.G."/>
            <person name="Abril J.F."/>
            <person name="Agbayani A."/>
            <person name="An H.-J."/>
            <person name="Andrews-Pfannkoch C."/>
            <person name="Baldwin D."/>
            <person name="Ballew R.M."/>
            <person name="Basu A."/>
            <person name="Baxendale J."/>
            <person name="Bayraktaroglu L."/>
            <person name="Beasley E.M."/>
            <person name="Beeson K.Y."/>
            <person name="Benos P.V."/>
            <person name="Berman B.P."/>
            <person name="Bhandari D."/>
            <person name="Bolshakov S."/>
            <person name="Borkova D."/>
            <person name="Botchan M.R."/>
            <person name="Bouck J."/>
            <person name="Brokstein P."/>
            <person name="Brottier P."/>
            <person name="Burtis K.C."/>
            <person name="Busam D.A."/>
            <person name="Butler H."/>
            <person name="Cadieu E."/>
            <person name="Center A."/>
            <person name="Chandra I."/>
            <person name="Cherry J.M."/>
            <person name="Cawley S."/>
            <person name="Dahlke C."/>
            <person name="Davenport L.B."/>
            <person name="Davies P."/>
            <person name="de Pablos B."/>
            <person name="Delcher A."/>
            <person name="Deng Z."/>
            <person name="Mays A.D."/>
            <person name="Dew I."/>
            <person name="Dietz S.M."/>
            <person name="Dodson K."/>
            <person name="Doup L.E."/>
            <person name="Downes M."/>
            <person name="Dugan-Rocha S."/>
            <person name="Dunkov B.C."/>
            <person name="Dunn P."/>
            <person name="Durbin K.J."/>
            <person name="Evangelista C.C."/>
            <person name="Ferraz C."/>
            <person name="Ferriera S."/>
            <person name="Fleischmann W."/>
            <person name="Fosler C."/>
            <person name="Gabrielian A.E."/>
            <person name="Garg N.S."/>
            <person name="Gelbart W.M."/>
            <person name="Glasser K."/>
            <person name="Glodek A."/>
            <person name="Gong F."/>
            <person name="Gorrell J.H."/>
            <person name="Gu Z."/>
            <person name="Guan P."/>
            <person name="Harris M."/>
            <person name="Harris N.L."/>
            <person name="Harvey D.A."/>
            <person name="Heiman T.J."/>
            <person name="Hernandez J.R."/>
            <person name="Houck J."/>
            <person name="Hostin D."/>
            <person name="Houston K.A."/>
            <person name="Howland T.J."/>
            <person name="Wei M.-H."/>
            <person name="Ibegwam C."/>
            <person name="Jalali M."/>
            <person name="Kalush F."/>
            <person name="Karpen G.H."/>
            <person name="Ke Z."/>
            <person name="Kennison J.A."/>
            <person name="Ketchum K.A."/>
            <person name="Kimmel B.E."/>
            <person name="Kodira C.D."/>
            <person name="Kraft C.L."/>
            <person name="Kravitz S."/>
            <person name="Kulp D."/>
            <person name="Lai Z."/>
            <person name="Lasko P."/>
            <person name="Lei Y."/>
            <person name="Levitsky A.A."/>
            <person name="Li J.H."/>
            <person name="Li Z."/>
            <person name="Liang Y."/>
            <person name="Lin X."/>
            <person name="Liu X."/>
            <person name="Mattei B."/>
            <person name="McIntosh T.C."/>
            <person name="McLeod M.P."/>
            <person name="McPherson D."/>
            <person name="Merkulov G."/>
            <person name="Milshina N.V."/>
            <person name="Mobarry C."/>
            <person name="Morris J."/>
            <person name="Moshrefi A."/>
            <person name="Mount S.M."/>
            <person name="Moy M."/>
            <person name="Murphy B."/>
            <person name="Murphy L."/>
            <person name="Muzny D.M."/>
            <person name="Nelson D.L."/>
            <person name="Nelson D.R."/>
            <person name="Nelson K.A."/>
            <person name="Nixon K."/>
            <person name="Nusskern D.R."/>
            <person name="Pacleb J.M."/>
            <person name="Palazzolo M."/>
            <person name="Pittman G.S."/>
            <person name="Pan S."/>
            <person name="Pollard J."/>
            <person name="Puri V."/>
            <person name="Reese M.G."/>
            <person name="Reinert K."/>
            <person name="Remington K."/>
            <person name="Saunders R.D.C."/>
            <person name="Scheeler F."/>
            <person name="Shen H."/>
            <person name="Shue B.C."/>
            <person name="Siden-Kiamos I."/>
            <person name="Simpson M."/>
            <person name="Skupski M.P."/>
            <person name="Smith T.J."/>
            <person name="Spier E."/>
            <person name="Spradling A.C."/>
            <person name="Stapleton M."/>
            <person name="Strong R."/>
            <person name="Sun E."/>
            <person name="Svirskas R."/>
            <person name="Tector C."/>
            <person name="Turner R."/>
            <person name="Venter E."/>
            <person name="Wang A.H."/>
            <person name="Wang X."/>
            <person name="Wang Z.-Y."/>
            <person name="Wassarman D.A."/>
            <person name="Weinstock G.M."/>
            <person name="Weissenbach J."/>
            <person name="Williams S.M."/>
            <person name="Woodage T."/>
            <person name="Worley K.C."/>
            <person name="Wu D."/>
            <person name="Yang S."/>
            <person name="Yao Q.A."/>
            <person name="Ye J."/>
            <person name="Yeh R.-F."/>
            <person name="Zaveri J.S."/>
            <person name="Zhan M."/>
            <person name="Zhang G."/>
            <person name="Zhao Q."/>
            <person name="Zheng L."/>
            <person name="Zheng X.H."/>
            <person name="Zhong F.N."/>
            <person name="Zhong W."/>
            <person name="Zhou X."/>
            <person name="Zhu S.C."/>
            <person name="Zhu X."/>
            <person name="Smith H.O."/>
            <person name="Gibbs R.A."/>
            <person name="Myers E.W."/>
            <person name="Rubin G.M."/>
            <person name="Venter J.C."/>
        </authorList>
    </citation>
    <scope>NUCLEOTIDE SEQUENCE [LARGE SCALE GENOMIC DNA]</scope>
    <source>
        <strain>Berkeley</strain>
    </source>
</reference>
<reference key="4">
    <citation type="journal article" date="2002" name="Genome Biol.">
        <title>Annotation of the Drosophila melanogaster euchromatic genome: a systematic review.</title>
        <authorList>
            <person name="Misra S."/>
            <person name="Crosby M.A."/>
            <person name="Mungall C.J."/>
            <person name="Matthews B.B."/>
            <person name="Campbell K.S."/>
            <person name="Hradecky P."/>
            <person name="Huang Y."/>
            <person name="Kaminker J.S."/>
            <person name="Millburn G.H."/>
            <person name="Prochnik S.E."/>
            <person name="Smith C.D."/>
            <person name="Tupy J.L."/>
            <person name="Whitfield E.J."/>
            <person name="Bayraktaroglu L."/>
            <person name="Berman B.P."/>
            <person name="Bettencourt B.R."/>
            <person name="Celniker S.E."/>
            <person name="de Grey A.D.N.J."/>
            <person name="Drysdale R.A."/>
            <person name="Harris N.L."/>
            <person name="Richter J."/>
            <person name="Russo S."/>
            <person name="Schroeder A.J."/>
            <person name="Shu S.Q."/>
            <person name="Stapleton M."/>
            <person name="Yamada C."/>
            <person name="Ashburner M."/>
            <person name="Gelbart W.M."/>
            <person name="Rubin G.M."/>
            <person name="Lewis S.E."/>
        </authorList>
    </citation>
    <scope>GENOME REANNOTATION</scope>
    <source>
        <strain>Berkeley</strain>
    </source>
</reference>
<reference key="5">
    <citation type="submission" date="2004-10" db="EMBL/GenBank/DDBJ databases">
        <authorList>
            <person name="Stapleton M."/>
            <person name="Carlson J.W."/>
            <person name="Chavez C."/>
            <person name="Frise E."/>
            <person name="George R.A."/>
            <person name="Pacleb J.M."/>
            <person name="Park S."/>
            <person name="Wan K.H."/>
            <person name="Yu C."/>
            <person name="Rubin G.M."/>
            <person name="Celniker S.E."/>
        </authorList>
    </citation>
    <scope>NUCLEOTIDE SEQUENCE [LARGE SCALE MRNA]</scope>
    <source>
        <strain>Berkeley</strain>
        <tissue>Embryo</tissue>
    </source>
</reference>
<reference key="6">
    <citation type="journal article" date="2002" name="Genome Biol.">
        <title>A Drosophila full-length cDNA resource.</title>
        <authorList>
            <person name="Stapleton M."/>
            <person name="Carlson J.W."/>
            <person name="Brokstein P."/>
            <person name="Yu C."/>
            <person name="Champe M."/>
            <person name="George R.A."/>
            <person name="Guarin H."/>
            <person name="Kronmiller B."/>
            <person name="Pacleb J.M."/>
            <person name="Park S."/>
            <person name="Wan K.H."/>
            <person name="Rubin G.M."/>
            <person name="Celniker S.E."/>
        </authorList>
    </citation>
    <scope>NUCLEOTIDE SEQUENCE [LARGE SCALE MRNA] OF 112-449</scope>
    <source>
        <strain>Berkeley</strain>
        <tissue>Ovary</tissue>
    </source>
</reference>
<gene>
    <name evidence="7" type="primary">PIG-V</name>
    <name evidence="7" type="ORF">CG44239</name>
</gene>
<sequence length="449" mass="51544">MTEKVTKLALASRLIVLLVQLVANGALPEHKPDVFRMPVSSDQNASWIDKVIKRCLGGLRHWDGEYFLHIAENLYSYENTLAFYPLYPVVVRHVGQAVEAIGISLSQESILLVVAVALNFWLFCESANLLFQLTQVLFNDLNKSWNAALIYCFNPATIFFTAAYSETFFAYSSLHLMLECSKPTGSFRYLRLGTALAACLLCRSNGLITLGYPLYFFGRQLLLKNKEPNTCMQLTQMTLTILGAIGILHTYYFYIYRLYCLPNTRPNHPQHIVDYAVERKYLLSGQGSEGSPWCQYTLPFPYTYVQSHYWDVGFLRYYKWKQLPNFLLALPMLSFMHWHCYDYMQHLAKAVWAKLTPSGFKELIRDHTTFPFVLHAAILTLVCTVYVHIQVSTRLLASATPVFYWFAADHMPKTLAQLKLRSKAGALFVWCTTYSLVGTVLFSNNYPWT</sequence>
<organism>
    <name type="scientific">Drosophila melanogaster</name>
    <name type="common">Fruit fly</name>
    <dbReference type="NCBI Taxonomy" id="7227"/>
    <lineage>
        <taxon>Eukaryota</taxon>
        <taxon>Metazoa</taxon>
        <taxon>Ecdysozoa</taxon>
        <taxon>Arthropoda</taxon>
        <taxon>Hexapoda</taxon>
        <taxon>Insecta</taxon>
        <taxon>Pterygota</taxon>
        <taxon>Neoptera</taxon>
        <taxon>Endopterygota</taxon>
        <taxon>Diptera</taxon>
        <taxon>Brachycera</taxon>
        <taxon>Muscomorpha</taxon>
        <taxon>Ephydroidea</taxon>
        <taxon>Drosophilidae</taxon>
        <taxon>Drosophila</taxon>
        <taxon>Sophophora</taxon>
    </lineage>
</organism>
<accession>Q9V7W1</accession>
<accession>A0A0B4LGQ7</accession>
<accession>B7YZR6</accession>
<accession>Q0E947</accession>
<accession>Q95TV6</accession>
<accession>Q9U3X2</accession>
<proteinExistence type="evidence at protein level"/>
<evidence type="ECO:0000250" key="1"/>
<evidence type="ECO:0000255" key="2"/>
<evidence type="ECO:0000269" key="3">
    <source>
    </source>
</evidence>
<evidence type="ECO:0000305" key="4"/>
<evidence type="ECO:0000305" key="5">
    <source>
    </source>
</evidence>
<evidence type="ECO:0000305" key="6">
    <source>
    </source>
</evidence>
<evidence type="ECO:0000312" key="7">
    <source>
        <dbReference type="FlyBase" id="FBgn0265174"/>
    </source>
</evidence>
<feature type="chain" id="PRO_0000246237" description="GPI mannosyltransferase 2">
    <location>
        <begin position="1"/>
        <end position="449"/>
    </location>
</feature>
<feature type="topological domain" description="Cytoplasmic" evidence="2">
    <location>
        <begin position="1"/>
        <end position="7"/>
    </location>
</feature>
<feature type="transmembrane region" description="Helical" evidence="2">
    <location>
        <begin position="8"/>
        <end position="28"/>
    </location>
</feature>
<feature type="topological domain" description="Lumenal" evidence="2">
    <location>
        <begin position="29"/>
        <end position="82"/>
    </location>
</feature>
<feature type="transmembrane region" description="Helical" evidence="2">
    <location>
        <begin position="83"/>
        <end position="103"/>
    </location>
</feature>
<feature type="topological domain" description="Cytoplasmic" evidence="2">
    <location>
        <begin position="104"/>
        <end position="109"/>
    </location>
</feature>
<feature type="transmembrane region" description="Helical" evidence="2">
    <location>
        <begin position="110"/>
        <end position="130"/>
    </location>
</feature>
<feature type="topological domain" description="Lumenal" evidence="2">
    <location>
        <begin position="131"/>
        <end position="148"/>
    </location>
</feature>
<feature type="transmembrane region" description="Helical" evidence="2">
    <location>
        <begin position="149"/>
        <end position="169"/>
    </location>
</feature>
<feature type="topological domain" description="Cytoplasmic" evidence="2">
    <location>
        <begin position="170"/>
        <end position="196"/>
    </location>
</feature>
<feature type="transmembrane region" description="Helical" evidence="2">
    <location>
        <begin position="197"/>
        <end position="217"/>
    </location>
</feature>
<feature type="topological domain" description="Lumenal" evidence="2">
    <location>
        <begin position="218"/>
        <end position="235"/>
    </location>
</feature>
<feature type="transmembrane region" description="Helical" evidence="2">
    <location>
        <begin position="236"/>
        <end position="256"/>
    </location>
</feature>
<feature type="topological domain" description="Cytoplasmic" evidence="2">
    <location>
        <begin position="257"/>
        <end position="368"/>
    </location>
</feature>
<feature type="transmembrane region" description="Helical" evidence="2">
    <location>
        <begin position="369"/>
        <end position="389"/>
    </location>
</feature>
<feature type="topological domain" description="Lumenal" evidence="2">
    <location>
        <begin position="390"/>
        <end position="423"/>
    </location>
</feature>
<feature type="transmembrane region" description="Helical" evidence="2">
    <location>
        <begin position="424"/>
        <end position="444"/>
    </location>
</feature>
<feature type="topological domain" description="Cytoplasmic" evidence="2">
    <location>
        <begin position="445"/>
        <end position="449"/>
    </location>
</feature>
<feature type="glycosylation site" description="N-linked (GlcNAc...) asparagine" evidence="2">
    <location>
        <position position="44"/>
    </location>
</feature>
<feature type="glycosylation site" description="N-linked (GlcNAc...) asparagine" evidence="2">
    <location>
        <position position="142"/>
    </location>
</feature>
<feature type="mutagenesis site" description="No phenotype; when associated with V-276." evidence="3">
    <original>W</original>
    <variation>L</variation>
    <location>
        <position position="62"/>
    </location>
</feature>
<feature type="mutagenesis site" description="Shows reduced levels of chp and ninaE, small rhabdomeres with severely disorganized microvilli and retinal degeneration; when associated with V-276." evidence="3">
    <original>D</original>
    <variation>A</variation>
    <location>
        <position position="63"/>
    </location>
</feature>
<feature type="mutagenesis site" description="Displays defects in chp trafficking to the membrane and mislocalization of ninaE, Rh3 and Rh4 in photoreceptors. Shows reduced levels of chp and ninaE, small rhabdomeres with severely disorganized microvilli and retinal degeneration; when associated with or without A-63 or L-310. Mild photoreceptor cell and microvillar disorganization; when associated with A-306. No phenotype; when associated with L-62." evidence="3">
    <original>A</original>
    <variation>V</variation>
    <location>
        <position position="276"/>
    </location>
</feature>
<feature type="mutagenesis site" description="Mild photoreceptor cell and microvillar disorganization; when associated with V-276." evidence="3">
    <original>Q</original>
    <variation>A</variation>
    <location>
        <position position="306"/>
    </location>
</feature>
<feature type="mutagenesis site" description="Shows reduced levels of chp and ninaE, small rhabdomeres with severely disorganized microvilli and retinal degeneration; when associated with V-276." evidence="3">
    <original>W</original>
    <variation>L</variation>
    <location>
        <position position="310"/>
    </location>
</feature>
<feature type="sequence conflict" description="In Ref. 1; AAF23239." evidence="4" ref="1">
    <original>S</original>
    <variation>P</variation>
    <location>
        <position position="41"/>
    </location>
</feature>
<feature type="sequence conflict" description="In Ref. 1; AAF23239." evidence="4" ref="1">
    <original>V</original>
    <variation>M</variation>
    <location>
        <position position="51"/>
    </location>
</feature>
<feature type="sequence conflict" description="In Ref. 1; AAF23239 and 6; AAL13718." evidence="4" ref="1 6">
    <original>F</original>
    <variation>L</variation>
    <location>
        <position position="120"/>
    </location>
</feature>
<name>PIGV_DROME</name>
<dbReference type="EC" id="2.4.1.-"/>
<dbReference type="EMBL" id="AF211892">
    <property type="protein sequence ID" value="AAF23239.1"/>
    <property type="molecule type" value="mRNA"/>
</dbReference>
<dbReference type="EMBL" id="AE013599">
    <property type="protein sequence ID" value="AHN56304.1"/>
    <property type="molecule type" value="Genomic_DNA"/>
</dbReference>
<dbReference type="EMBL" id="AE013599">
    <property type="protein sequence ID" value="AHN56305.1"/>
    <property type="molecule type" value="Genomic_DNA"/>
</dbReference>
<dbReference type="EMBL" id="AE013599">
    <property type="protein sequence ID" value="AHN56306.1"/>
    <property type="molecule type" value="Genomic_DNA"/>
</dbReference>
<dbReference type="EMBL" id="BT016020">
    <property type="protein sequence ID" value="AAV36905.1"/>
    <property type="molecule type" value="mRNA"/>
</dbReference>
<dbReference type="EMBL" id="AY058489">
    <property type="protein sequence ID" value="AAL13718.1"/>
    <property type="status" value="ALT_INIT"/>
    <property type="molecule type" value="mRNA"/>
</dbReference>
<dbReference type="RefSeq" id="NP_001286508.1">
    <property type="nucleotide sequence ID" value="NM_001299579.1"/>
</dbReference>
<dbReference type="RefSeq" id="NP_001286509.1">
    <property type="nucleotide sequence ID" value="NM_001299580.1"/>
</dbReference>
<dbReference type="RefSeq" id="NP_001286510.1">
    <property type="nucleotide sequence ID" value="NM_001299581.1"/>
</dbReference>
<dbReference type="FunCoup" id="Q9V7W1">
    <property type="interactions" value="567"/>
</dbReference>
<dbReference type="STRING" id="7227.FBpp0308218"/>
<dbReference type="CAZy" id="GT76">
    <property type="family name" value="Glycosyltransferase Family 76"/>
</dbReference>
<dbReference type="GlyCosmos" id="Q9V7W1">
    <property type="glycosylation" value="2 sites, No reported glycans"/>
</dbReference>
<dbReference type="GlyGen" id="Q9V7W1">
    <property type="glycosylation" value="2 sites"/>
</dbReference>
<dbReference type="PaxDb" id="7227-FBpp0086200"/>
<dbReference type="DNASU" id="19835383"/>
<dbReference type="EnsemblMetazoa" id="FBtr0339071">
    <property type="protein sequence ID" value="FBpp0308217"/>
    <property type="gene ID" value="FBgn0265174"/>
</dbReference>
<dbReference type="EnsemblMetazoa" id="FBtr0339072">
    <property type="protein sequence ID" value="FBpp0308218"/>
    <property type="gene ID" value="FBgn0265174"/>
</dbReference>
<dbReference type="EnsemblMetazoa" id="FBtr0339073">
    <property type="protein sequence ID" value="FBpp0308219"/>
    <property type="gene ID" value="FBgn0265174"/>
</dbReference>
<dbReference type="GeneID" id="19835383"/>
<dbReference type="KEGG" id="dme:Dmel_CG44239"/>
<dbReference type="UCSC" id="CG6657-RA">
    <property type="organism name" value="d. melanogaster"/>
</dbReference>
<dbReference type="AGR" id="FB:FBgn0265174"/>
<dbReference type="CTD" id="19835383"/>
<dbReference type="FlyBase" id="FBgn0265174">
    <property type="gene designation" value="PIG-V"/>
</dbReference>
<dbReference type="VEuPathDB" id="VectorBase:FBgn0265174"/>
<dbReference type="eggNOG" id="KOG2647">
    <property type="taxonomic scope" value="Eukaryota"/>
</dbReference>
<dbReference type="GeneTree" id="ENSGT00390000013174"/>
<dbReference type="HOGENOM" id="CLU_029048_3_2_1"/>
<dbReference type="InParanoid" id="Q9V7W1"/>
<dbReference type="OMA" id="GALFIWC"/>
<dbReference type="OrthoDB" id="10252502at2759"/>
<dbReference type="PhylomeDB" id="Q9V7W1"/>
<dbReference type="Reactome" id="R-DME-162710">
    <property type="pathway name" value="Synthesis of glycosylphosphatidylinositol (GPI)"/>
</dbReference>
<dbReference type="UniPathway" id="UPA00196"/>
<dbReference type="BioGRID-ORCS" id="19835383">
    <property type="hits" value="0 hits in 1 CRISPR screen"/>
</dbReference>
<dbReference type="GenomeRNAi" id="19835383"/>
<dbReference type="PRO" id="PR:Q9V7W1"/>
<dbReference type="Proteomes" id="UP000000803">
    <property type="component" value="Chromosome 2R"/>
</dbReference>
<dbReference type="Bgee" id="FBgn0265174">
    <property type="expression patterns" value="Expressed in oviduct (Drosophila) and 81 other cell types or tissues"/>
</dbReference>
<dbReference type="GO" id="GO:0005789">
    <property type="term" value="C:endoplasmic reticulum membrane"/>
    <property type="evidence" value="ECO:0000250"/>
    <property type="project" value="UniProtKB"/>
</dbReference>
<dbReference type="GO" id="GO:0031501">
    <property type="term" value="C:mannosyltransferase complex"/>
    <property type="evidence" value="ECO:0000318"/>
    <property type="project" value="GO_Central"/>
</dbReference>
<dbReference type="GO" id="GO:0000009">
    <property type="term" value="F:alpha-1,6-mannosyltransferase activity"/>
    <property type="evidence" value="ECO:0000250"/>
    <property type="project" value="UniProtKB"/>
</dbReference>
<dbReference type="GO" id="GO:0004376">
    <property type="term" value="F:glycolipid mannosyltransferase activity"/>
    <property type="evidence" value="ECO:0007669"/>
    <property type="project" value="InterPro"/>
</dbReference>
<dbReference type="GO" id="GO:0000030">
    <property type="term" value="F:mannosyltransferase activity"/>
    <property type="evidence" value="ECO:0000318"/>
    <property type="project" value="GO_Central"/>
</dbReference>
<dbReference type="GO" id="GO:0006506">
    <property type="term" value="P:GPI anchor biosynthetic process"/>
    <property type="evidence" value="ECO:0000315"/>
    <property type="project" value="FlyBase"/>
</dbReference>
<dbReference type="GO" id="GO:0045313">
    <property type="term" value="P:rhabdomere membrane biogenesis"/>
    <property type="evidence" value="ECO:0000315"/>
    <property type="project" value="FlyBase"/>
</dbReference>
<dbReference type="InterPro" id="IPR007315">
    <property type="entry name" value="PIG-V/Gpi18"/>
</dbReference>
<dbReference type="PANTHER" id="PTHR12468">
    <property type="entry name" value="GPI MANNOSYLTRANSFERASE 2"/>
    <property type="match status" value="1"/>
</dbReference>
<dbReference type="PANTHER" id="PTHR12468:SF2">
    <property type="entry name" value="GPI MANNOSYLTRANSFERASE 2"/>
    <property type="match status" value="1"/>
</dbReference>
<dbReference type="Pfam" id="PF04188">
    <property type="entry name" value="Mannosyl_trans2"/>
    <property type="match status" value="1"/>
</dbReference>
<protein>
    <recommendedName>
        <fullName>GPI mannosyltransferase 2</fullName>
        <ecNumber>2.4.1.-</ecNumber>
    </recommendedName>
    <alternativeName>
        <fullName>GPI mannosyltransferase II</fullName>
        <shortName>GPI-MT-II</shortName>
    </alternativeName>
</protein>
<comment type="function">
    <text evidence="3">Mannosyltransferase involved in glycosylphosphatidylinositol-anchor biosynthesis. Transfers the second mannose to the glycosylphosphatidylinositol during GPI precursor assembly. Required for the GPI-mediated endoplasmic reticulum exit and proper targeting to the cell surface of chp. Required for GPI-mediated membrane attachment of chp, qsm and Cont. Essential for microvillar stability in the rhabdomere.</text>
</comment>
<comment type="pathway">
    <text>Glycolipid biosynthesis; glycosylphosphatidylinositol-anchor biosynthesis.</text>
</comment>
<comment type="subcellular location">
    <subcellularLocation>
        <location evidence="1">Endoplasmic reticulum membrane</location>
        <topology evidence="1">Multi-pass membrane protein</topology>
    </subcellularLocation>
</comment>
<comment type="disruption phenotype">
    <text evidence="3">Homozygous lethal.</text>
</comment>
<comment type="similarity">
    <text evidence="4">Belongs to the PIGV family.</text>
</comment>
<comment type="caution">
    <text evidence="5 6">Was originally (PubMed:11102367) named veg. However, more thorough studies (PubMed:22575127) found that the veg phenotype does not map to this protein. It is still not known which gene corresponds to the veg phenotype.</text>
</comment>
<comment type="sequence caution" evidence="4">
    <conflict type="erroneous initiation">
        <sequence resource="EMBL-CDS" id="AAL13718"/>
    </conflict>
    <text>Truncated N-terminus.</text>
</comment>